<dbReference type="EC" id="3.1.1.29"/>
<dbReference type="EMBL" id="AE001572">
    <property type="protein sequence ID" value="AAD19814.1"/>
    <property type="status" value="ALT_SEQ"/>
    <property type="molecule type" value="Genomic_DNA"/>
</dbReference>
<dbReference type="EMBL" id="AE014297">
    <property type="protein sequence ID" value="AAN13366.1"/>
    <property type="molecule type" value="Genomic_DNA"/>
</dbReference>
<dbReference type="EMBL" id="AY122198">
    <property type="protein sequence ID" value="AAM52710.1"/>
    <property type="status" value="ALT_INIT"/>
    <property type="molecule type" value="mRNA"/>
</dbReference>
<dbReference type="RefSeq" id="NP_001287202.1">
    <property type="nucleotide sequence ID" value="NM_001300273.1"/>
</dbReference>
<dbReference type="RefSeq" id="NP_649675.2">
    <property type="nucleotide sequence ID" value="NM_141418.4"/>
</dbReference>
<dbReference type="SMR" id="O97067"/>
<dbReference type="BioGRID" id="66012">
    <property type="interactions" value="19"/>
</dbReference>
<dbReference type="DIP" id="DIP-17218N"/>
<dbReference type="FunCoup" id="O97067">
    <property type="interactions" value="2744"/>
</dbReference>
<dbReference type="IntAct" id="O97067">
    <property type="interactions" value="9"/>
</dbReference>
<dbReference type="STRING" id="7227.FBpp0311968"/>
<dbReference type="PaxDb" id="7227-FBpp0290838"/>
<dbReference type="DNASU" id="40814"/>
<dbReference type="EnsemblMetazoa" id="FBtr0301623">
    <property type="protein sequence ID" value="FBpp0290838"/>
    <property type="gene ID" value="FBgn0026566"/>
</dbReference>
<dbReference type="EnsemblMetazoa" id="FBtr0346140">
    <property type="protein sequence ID" value="FBpp0311968"/>
    <property type="gene ID" value="FBgn0026566"/>
</dbReference>
<dbReference type="GeneID" id="40814"/>
<dbReference type="KEGG" id="dme:Dmel_CG1307"/>
<dbReference type="AGR" id="FB:FBgn0026566"/>
<dbReference type="FlyBase" id="FBgn0026566">
    <property type="gene designation" value="CG1307"/>
</dbReference>
<dbReference type="VEuPathDB" id="VectorBase:FBgn0026566"/>
<dbReference type="eggNOG" id="KOG3282">
    <property type="taxonomic scope" value="Eukaryota"/>
</dbReference>
<dbReference type="GeneTree" id="ENSGT00390000015991"/>
<dbReference type="HOGENOM" id="CLU_073661_0_3_1"/>
<dbReference type="InParanoid" id="O97067"/>
<dbReference type="OMA" id="GHAAVEC"/>
<dbReference type="OrthoDB" id="1733656at2759"/>
<dbReference type="PhylomeDB" id="O97067"/>
<dbReference type="BioGRID-ORCS" id="40814">
    <property type="hits" value="0 hits in 1 CRISPR screen"/>
</dbReference>
<dbReference type="GenomeRNAi" id="40814"/>
<dbReference type="PRO" id="PR:O97067"/>
<dbReference type="Proteomes" id="UP000000803">
    <property type="component" value="Chromosome 3R"/>
</dbReference>
<dbReference type="Bgee" id="FBgn0026566">
    <property type="expression patterns" value="Expressed in spermatogonium in testis and 141 other cell types or tissues"/>
</dbReference>
<dbReference type="ExpressionAtlas" id="O97067">
    <property type="expression patterns" value="baseline and differential"/>
</dbReference>
<dbReference type="GO" id="GO:0005829">
    <property type="term" value="C:cytosol"/>
    <property type="evidence" value="ECO:0000318"/>
    <property type="project" value="GO_Central"/>
</dbReference>
<dbReference type="GO" id="GO:0005741">
    <property type="term" value="C:mitochondrial outer membrane"/>
    <property type="evidence" value="ECO:0000250"/>
    <property type="project" value="FlyBase"/>
</dbReference>
<dbReference type="GO" id="GO:0004045">
    <property type="term" value="F:peptidyl-tRNA hydrolase activity"/>
    <property type="evidence" value="ECO:0000318"/>
    <property type="project" value="GO_Central"/>
</dbReference>
<dbReference type="CDD" id="cd02430">
    <property type="entry name" value="PTH2"/>
    <property type="match status" value="1"/>
</dbReference>
<dbReference type="FunFam" id="3.40.1490.10:FF:000001">
    <property type="entry name" value="Peptidyl-tRNA hydrolase 2"/>
    <property type="match status" value="1"/>
</dbReference>
<dbReference type="Gene3D" id="3.40.1490.10">
    <property type="entry name" value="Bit1"/>
    <property type="match status" value="1"/>
</dbReference>
<dbReference type="InterPro" id="IPR023476">
    <property type="entry name" value="Pep_tRNA_hydro_II_dom_sf"/>
</dbReference>
<dbReference type="InterPro" id="IPR002833">
    <property type="entry name" value="PTH2"/>
</dbReference>
<dbReference type="NCBIfam" id="TIGR00283">
    <property type="entry name" value="arch_pth2"/>
    <property type="match status" value="1"/>
</dbReference>
<dbReference type="NCBIfam" id="NF003314">
    <property type="entry name" value="PRK04322.1"/>
    <property type="match status" value="1"/>
</dbReference>
<dbReference type="PANTHER" id="PTHR12649">
    <property type="entry name" value="PEPTIDYL-TRNA HYDROLASE 2"/>
    <property type="match status" value="1"/>
</dbReference>
<dbReference type="PANTHER" id="PTHR12649:SF11">
    <property type="entry name" value="PEPTIDYL-TRNA HYDROLASE 2, MITOCHONDRIAL"/>
    <property type="match status" value="1"/>
</dbReference>
<dbReference type="Pfam" id="PF01981">
    <property type="entry name" value="PTH2"/>
    <property type="match status" value="1"/>
</dbReference>
<dbReference type="SUPFAM" id="SSF102462">
    <property type="entry name" value="Peptidyl-tRNA hydrolase II"/>
    <property type="match status" value="1"/>
</dbReference>
<gene>
    <name type="ORF">CG1307</name>
</gene>
<keyword id="KW-0378">Hydrolase</keyword>
<keyword id="KW-1185">Reference proteome</keyword>
<comment type="function">
    <text evidence="1">The natural substrate for this enzyme may be peptidyl-tRNAs which drop off the ribosome during protein synthesis.</text>
</comment>
<comment type="catalytic activity">
    <reaction>
        <text>an N-acyl-L-alpha-aminoacyl-tRNA + H2O = an N-acyl-L-amino acid + a tRNA + H(+)</text>
        <dbReference type="Rhea" id="RHEA:54448"/>
        <dbReference type="Rhea" id="RHEA-COMP:10123"/>
        <dbReference type="Rhea" id="RHEA-COMP:13883"/>
        <dbReference type="ChEBI" id="CHEBI:15377"/>
        <dbReference type="ChEBI" id="CHEBI:15378"/>
        <dbReference type="ChEBI" id="CHEBI:59874"/>
        <dbReference type="ChEBI" id="CHEBI:78442"/>
        <dbReference type="ChEBI" id="CHEBI:138191"/>
        <dbReference type="EC" id="3.1.1.29"/>
    </reaction>
</comment>
<comment type="similarity">
    <text evidence="2">Belongs to the PTH2 family.</text>
</comment>
<comment type="sequence caution" evidence="2">
    <conflict type="erroneous gene model prediction">
        <sequence resource="EMBL-CDS" id="AAD19814"/>
    </conflict>
</comment>
<comment type="sequence caution" evidence="2">
    <conflict type="erroneous initiation">
        <sequence resource="EMBL-CDS" id="AAM52710"/>
    </conflict>
</comment>
<accession>O97067</accession>
<accession>Q8MR09</accession>
<accession>Q9VI42</accession>
<evidence type="ECO:0000250" key="1"/>
<evidence type="ECO:0000305" key="2"/>
<proteinExistence type="evidence at transcript level"/>
<sequence>MGDKLLDPTQIINGLAVMLSFFVGYRYALKRGDAKDSVTEGAATPFSQESSVSSGSEASVSDKGYGGLNDNFKMVLVVRNDLKMGKGKIAAQCGHGAVGAYQRAVVRTPRLLRSWENCGCAKIAVRVESEAELMAIKKEAERQQLNTCLIRDAGRTQIEANSKTVLAVGPAAAADIDRVTGHLKLL</sequence>
<reference key="1">
    <citation type="submission" date="1999-01" db="EMBL/GenBank/DDBJ databases">
        <title>Complete sequence of the Antennapedia complex of Drosophila.</title>
        <authorList>
            <person name="Celniker S.E."/>
            <person name="Pfeiffer B."/>
            <person name="Knafels J."/>
            <person name="Martin C.H."/>
            <person name="Mayeda C.A."/>
            <person name="Palazzolo M.J."/>
        </authorList>
    </citation>
    <scope>NUCLEOTIDE SEQUENCE [GENOMIC DNA]</scope>
    <source>
        <strain>Berkeley</strain>
    </source>
</reference>
<reference key="2">
    <citation type="journal article" date="2000" name="Science">
        <title>The genome sequence of Drosophila melanogaster.</title>
        <authorList>
            <person name="Adams M.D."/>
            <person name="Celniker S.E."/>
            <person name="Holt R.A."/>
            <person name="Evans C.A."/>
            <person name="Gocayne J.D."/>
            <person name="Amanatides P.G."/>
            <person name="Scherer S.E."/>
            <person name="Li P.W."/>
            <person name="Hoskins R.A."/>
            <person name="Galle R.F."/>
            <person name="George R.A."/>
            <person name="Lewis S.E."/>
            <person name="Richards S."/>
            <person name="Ashburner M."/>
            <person name="Henderson S.N."/>
            <person name="Sutton G.G."/>
            <person name="Wortman J.R."/>
            <person name="Yandell M.D."/>
            <person name="Zhang Q."/>
            <person name="Chen L.X."/>
            <person name="Brandon R.C."/>
            <person name="Rogers Y.-H.C."/>
            <person name="Blazej R.G."/>
            <person name="Champe M."/>
            <person name="Pfeiffer B.D."/>
            <person name="Wan K.H."/>
            <person name="Doyle C."/>
            <person name="Baxter E.G."/>
            <person name="Helt G."/>
            <person name="Nelson C.R."/>
            <person name="Miklos G.L.G."/>
            <person name="Abril J.F."/>
            <person name="Agbayani A."/>
            <person name="An H.-J."/>
            <person name="Andrews-Pfannkoch C."/>
            <person name="Baldwin D."/>
            <person name="Ballew R.M."/>
            <person name="Basu A."/>
            <person name="Baxendale J."/>
            <person name="Bayraktaroglu L."/>
            <person name="Beasley E.M."/>
            <person name="Beeson K.Y."/>
            <person name="Benos P.V."/>
            <person name="Berman B.P."/>
            <person name="Bhandari D."/>
            <person name="Bolshakov S."/>
            <person name="Borkova D."/>
            <person name="Botchan M.R."/>
            <person name="Bouck J."/>
            <person name="Brokstein P."/>
            <person name="Brottier P."/>
            <person name="Burtis K.C."/>
            <person name="Busam D.A."/>
            <person name="Butler H."/>
            <person name="Cadieu E."/>
            <person name="Center A."/>
            <person name="Chandra I."/>
            <person name="Cherry J.M."/>
            <person name="Cawley S."/>
            <person name="Dahlke C."/>
            <person name="Davenport L.B."/>
            <person name="Davies P."/>
            <person name="de Pablos B."/>
            <person name="Delcher A."/>
            <person name="Deng Z."/>
            <person name="Mays A.D."/>
            <person name="Dew I."/>
            <person name="Dietz S.M."/>
            <person name="Dodson K."/>
            <person name="Doup L.E."/>
            <person name="Downes M."/>
            <person name="Dugan-Rocha S."/>
            <person name="Dunkov B.C."/>
            <person name="Dunn P."/>
            <person name="Durbin K.J."/>
            <person name="Evangelista C.C."/>
            <person name="Ferraz C."/>
            <person name="Ferriera S."/>
            <person name="Fleischmann W."/>
            <person name="Fosler C."/>
            <person name="Gabrielian A.E."/>
            <person name="Garg N.S."/>
            <person name="Gelbart W.M."/>
            <person name="Glasser K."/>
            <person name="Glodek A."/>
            <person name="Gong F."/>
            <person name="Gorrell J.H."/>
            <person name="Gu Z."/>
            <person name="Guan P."/>
            <person name="Harris M."/>
            <person name="Harris N.L."/>
            <person name="Harvey D.A."/>
            <person name="Heiman T.J."/>
            <person name="Hernandez J.R."/>
            <person name="Houck J."/>
            <person name="Hostin D."/>
            <person name="Houston K.A."/>
            <person name="Howland T.J."/>
            <person name="Wei M.-H."/>
            <person name="Ibegwam C."/>
            <person name="Jalali M."/>
            <person name="Kalush F."/>
            <person name="Karpen G.H."/>
            <person name="Ke Z."/>
            <person name="Kennison J.A."/>
            <person name="Ketchum K.A."/>
            <person name="Kimmel B.E."/>
            <person name="Kodira C.D."/>
            <person name="Kraft C.L."/>
            <person name="Kravitz S."/>
            <person name="Kulp D."/>
            <person name="Lai Z."/>
            <person name="Lasko P."/>
            <person name="Lei Y."/>
            <person name="Levitsky A.A."/>
            <person name="Li J.H."/>
            <person name="Li Z."/>
            <person name="Liang Y."/>
            <person name="Lin X."/>
            <person name="Liu X."/>
            <person name="Mattei B."/>
            <person name="McIntosh T.C."/>
            <person name="McLeod M.P."/>
            <person name="McPherson D."/>
            <person name="Merkulov G."/>
            <person name="Milshina N.V."/>
            <person name="Mobarry C."/>
            <person name="Morris J."/>
            <person name="Moshrefi A."/>
            <person name="Mount S.M."/>
            <person name="Moy M."/>
            <person name="Murphy B."/>
            <person name="Murphy L."/>
            <person name="Muzny D.M."/>
            <person name="Nelson D.L."/>
            <person name="Nelson D.R."/>
            <person name="Nelson K.A."/>
            <person name="Nixon K."/>
            <person name="Nusskern D.R."/>
            <person name="Pacleb J.M."/>
            <person name="Palazzolo M."/>
            <person name="Pittman G.S."/>
            <person name="Pan S."/>
            <person name="Pollard J."/>
            <person name="Puri V."/>
            <person name="Reese M.G."/>
            <person name="Reinert K."/>
            <person name="Remington K."/>
            <person name="Saunders R.D.C."/>
            <person name="Scheeler F."/>
            <person name="Shen H."/>
            <person name="Shue B.C."/>
            <person name="Siden-Kiamos I."/>
            <person name="Simpson M."/>
            <person name="Skupski M.P."/>
            <person name="Smith T.J."/>
            <person name="Spier E."/>
            <person name="Spradling A.C."/>
            <person name="Stapleton M."/>
            <person name="Strong R."/>
            <person name="Sun E."/>
            <person name="Svirskas R."/>
            <person name="Tector C."/>
            <person name="Turner R."/>
            <person name="Venter E."/>
            <person name="Wang A.H."/>
            <person name="Wang X."/>
            <person name="Wang Z.-Y."/>
            <person name="Wassarman D.A."/>
            <person name="Weinstock G.M."/>
            <person name="Weissenbach J."/>
            <person name="Williams S.M."/>
            <person name="Woodage T."/>
            <person name="Worley K.C."/>
            <person name="Wu D."/>
            <person name="Yang S."/>
            <person name="Yao Q.A."/>
            <person name="Ye J."/>
            <person name="Yeh R.-F."/>
            <person name="Zaveri J.S."/>
            <person name="Zhan M."/>
            <person name="Zhang G."/>
            <person name="Zhao Q."/>
            <person name="Zheng L."/>
            <person name="Zheng X.H."/>
            <person name="Zhong F.N."/>
            <person name="Zhong W."/>
            <person name="Zhou X."/>
            <person name="Zhu S.C."/>
            <person name="Zhu X."/>
            <person name="Smith H.O."/>
            <person name="Gibbs R.A."/>
            <person name="Myers E.W."/>
            <person name="Rubin G.M."/>
            <person name="Venter J.C."/>
        </authorList>
    </citation>
    <scope>NUCLEOTIDE SEQUENCE [LARGE SCALE GENOMIC DNA]</scope>
    <source>
        <strain>Berkeley</strain>
    </source>
</reference>
<reference key="3">
    <citation type="journal article" date="2002" name="Genome Biol.">
        <title>Annotation of the Drosophila melanogaster euchromatic genome: a systematic review.</title>
        <authorList>
            <person name="Misra S."/>
            <person name="Crosby M.A."/>
            <person name="Mungall C.J."/>
            <person name="Matthews B.B."/>
            <person name="Campbell K.S."/>
            <person name="Hradecky P."/>
            <person name="Huang Y."/>
            <person name="Kaminker J.S."/>
            <person name="Millburn G.H."/>
            <person name="Prochnik S.E."/>
            <person name="Smith C.D."/>
            <person name="Tupy J.L."/>
            <person name="Whitfield E.J."/>
            <person name="Bayraktaroglu L."/>
            <person name="Berman B.P."/>
            <person name="Bettencourt B.R."/>
            <person name="Celniker S.E."/>
            <person name="de Grey A.D.N.J."/>
            <person name="Drysdale R.A."/>
            <person name="Harris N.L."/>
            <person name="Richter J."/>
            <person name="Russo S."/>
            <person name="Schroeder A.J."/>
            <person name="Shu S.Q."/>
            <person name="Stapleton M."/>
            <person name="Yamada C."/>
            <person name="Ashburner M."/>
            <person name="Gelbart W.M."/>
            <person name="Rubin G.M."/>
            <person name="Lewis S.E."/>
        </authorList>
    </citation>
    <scope>GENOME REANNOTATION</scope>
    <source>
        <strain>Berkeley</strain>
    </source>
</reference>
<reference key="4">
    <citation type="journal article" date="2002" name="Genome Biol.">
        <title>A Drosophila full-length cDNA resource.</title>
        <authorList>
            <person name="Stapleton M."/>
            <person name="Carlson J.W."/>
            <person name="Brokstein P."/>
            <person name="Yu C."/>
            <person name="Champe M."/>
            <person name="George R.A."/>
            <person name="Guarin H."/>
            <person name="Kronmiller B."/>
            <person name="Pacleb J.M."/>
            <person name="Park S."/>
            <person name="Wan K.H."/>
            <person name="Rubin G.M."/>
            <person name="Celniker S.E."/>
        </authorList>
    </citation>
    <scope>NUCLEOTIDE SEQUENCE [LARGE SCALE MRNA]</scope>
    <source>
        <strain>Berkeley</strain>
        <tissue>Embryo</tissue>
    </source>
</reference>
<name>PTH2_DROME</name>
<protein>
    <recommendedName>
        <fullName>Probable peptidyl-tRNA hydrolase 2</fullName>
        <shortName>PTH 2</shortName>
        <ecNumber>3.1.1.29</ecNumber>
    </recommendedName>
</protein>
<feature type="chain" id="PRO_0000120282" description="Probable peptidyl-tRNA hydrolase 2">
    <location>
        <begin position="1"/>
        <end position="186"/>
    </location>
</feature>
<organism>
    <name type="scientific">Drosophila melanogaster</name>
    <name type="common">Fruit fly</name>
    <dbReference type="NCBI Taxonomy" id="7227"/>
    <lineage>
        <taxon>Eukaryota</taxon>
        <taxon>Metazoa</taxon>
        <taxon>Ecdysozoa</taxon>
        <taxon>Arthropoda</taxon>
        <taxon>Hexapoda</taxon>
        <taxon>Insecta</taxon>
        <taxon>Pterygota</taxon>
        <taxon>Neoptera</taxon>
        <taxon>Endopterygota</taxon>
        <taxon>Diptera</taxon>
        <taxon>Brachycera</taxon>
        <taxon>Muscomorpha</taxon>
        <taxon>Ephydroidea</taxon>
        <taxon>Drosophilidae</taxon>
        <taxon>Drosophila</taxon>
        <taxon>Sophophora</taxon>
    </lineage>
</organism>